<gene>
    <name evidence="1" type="primary">prfA</name>
    <name type="ordered locus">DICTH_0647</name>
</gene>
<keyword id="KW-0963">Cytoplasm</keyword>
<keyword id="KW-0488">Methylation</keyword>
<keyword id="KW-0648">Protein biosynthesis</keyword>
<dbReference type="EMBL" id="CP001146">
    <property type="protein sequence ID" value="ACI19547.1"/>
    <property type="molecule type" value="Genomic_DNA"/>
</dbReference>
<dbReference type="RefSeq" id="WP_012548179.1">
    <property type="nucleotide sequence ID" value="NC_011297.1"/>
</dbReference>
<dbReference type="SMR" id="B5YDB2"/>
<dbReference type="STRING" id="309799.DICTH_0647"/>
<dbReference type="PaxDb" id="309799-DICTH_0647"/>
<dbReference type="KEGG" id="dth:DICTH_0647"/>
<dbReference type="eggNOG" id="COG0216">
    <property type="taxonomic scope" value="Bacteria"/>
</dbReference>
<dbReference type="HOGENOM" id="CLU_036856_0_1_0"/>
<dbReference type="OrthoDB" id="9806673at2"/>
<dbReference type="Proteomes" id="UP000001733">
    <property type="component" value="Chromosome"/>
</dbReference>
<dbReference type="GO" id="GO:0005737">
    <property type="term" value="C:cytoplasm"/>
    <property type="evidence" value="ECO:0007669"/>
    <property type="project" value="UniProtKB-SubCell"/>
</dbReference>
<dbReference type="GO" id="GO:0016149">
    <property type="term" value="F:translation release factor activity, codon specific"/>
    <property type="evidence" value="ECO:0007669"/>
    <property type="project" value="UniProtKB-UniRule"/>
</dbReference>
<dbReference type="FunFam" id="3.30.160.20:FF:000004">
    <property type="entry name" value="Peptide chain release factor 1"/>
    <property type="match status" value="1"/>
</dbReference>
<dbReference type="FunFam" id="3.30.70.1660:FF:000002">
    <property type="entry name" value="Peptide chain release factor 1"/>
    <property type="match status" value="1"/>
</dbReference>
<dbReference type="FunFam" id="3.30.70.1660:FF:000004">
    <property type="entry name" value="Peptide chain release factor 1"/>
    <property type="match status" value="1"/>
</dbReference>
<dbReference type="Gene3D" id="3.30.160.20">
    <property type="match status" value="1"/>
</dbReference>
<dbReference type="Gene3D" id="3.30.70.1660">
    <property type="match status" value="2"/>
</dbReference>
<dbReference type="Gene3D" id="6.10.140.1950">
    <property type="match status" value="1"/>
</dbReference>
<dbReference type="HAMAP" id="MF_00093">
    <property type="entry name" value="Rel_fac_1"/>
    <property type="match status" value="1"/>
</dbReference>
<dbReference type="InterPro" id="IPR005139">
    <property type="entry name" value="PCRF"/>
</dbReference>
<dbReference type="InterPro" id="IPR000352">
    <property type="entry name" value="Pep_chain_release_fac_I"/>
</dbReference>
<dbReference type="InterPro" id="IPR045853">
    <property type="entry name" value="Pep_chain_release_fac_I_sf"/>
</dbReference>
<dbReference type="InterPro" id="IPR050057">
    <property type="entry name" value="Prokaryotic/Mito_RF"/>
</dbReference>
<dbReference type="InterPro" id="IPR004373">
    <property type="entry name" value="RF-1"/>
</dbReference>
<dbReference type="NCBIfam" id="TIGR00019">
    <property type="entry name" value="prfA"/>
    <property type="match status" value="1"/>
</dbReference>
<dbReference type="NCBIfam" id="NF001859">
    <property type="entry name" value="PRK00591.1"/>
    <property type="match status" value="1"/>
</dbReference>
<dbReference type="PANTHER" id="PTHR43804">
    <property type="entry name" value="LD18447P"/>
    <property type="match status" value="1"/>
</dbReference>
<dbReference type="PANTHER" id="PTHR43804:SF7">
    <property type="entry name" value="LD18447P"/>
    <property type="match status" value="1"/>
</dbReference>
<dbReference type="Pfam" id="PF03462">
    <property type="entry name" value="PCRF"/>
    <property type="match status" value="1"/>
</dbReference>
<dbReference type="Pfam" id="PF00472">
    <property type="entry name" value="RF-1"/>
    <property type="match status" value="1"/>
</dbReference>
<dbReference type="SMART" id="SM00937">
    <property type="entry name" value="PCRF"/>
    <property type="match status" value="1"/>
</dbReference>
<dbReference type="SUPFAM" id="SSF75620">
    <property type="entry name" value="Release factor"/>
    <property type="match status" value="1"/>
</dbReference>
<dbReference type="PROSITE" id="PS00745">
    <property type="entry name" value="RF_PROK_I"/>
    <property type="match status" value="1"/>
</dbReference>
<sequence length="367" mass="42442">MLQKLVLDKLEEIEKRFKEIENLLTKEEIISDLSRYQSLLKERAKIEEIVEKFSEYKKLLKEREDLEVMTKEEQDEDLRSLAEAELEEIEKKLEKIEFDLKALLLPKDPNDEKNIIMEIRAGTGGEEAALFAADLFRMYVGYAQKKGWKVEIVSSNPTGLGGYKEIIFIVEGKGAYSRLKFESGVHRVQRVPITESSGRIHTSTATVAVLPEMEEVDVEIDPKDLRIETFRSGGAGGQHVNKTESGVRITHIPSGIVVQCQDERSQHQNREKAMKVLRARLYEYYQREKENEIASQRRQQVGTGERSEKIRTYNFPQRRVTDHRINYSSFQLEEVLSGELDEFIDRLILAEKEEQIKKLFEEVGATS</sequence>
<proteinExistence type="inferred from homology"/>
<feature type="chain" id="PRO_1000117236" description="Peptide chain release factor 1">
    <location>
        <begin position="1"/>
        <end position="367"/>
    </location>
</feature>
<feature type="modified residue" description="N5-methylglutamine" evidence="1">
    <location>
        <position position="238"/>
    </location>
</feature>
<reference key="1">
    <citation type="journal article" date="2014" name="Genome Announc.">
        <title>Complete Genome Sequence of the Extreme Thermophile Dictyoglomus thermophilum H-6-12.</title>
        <authorList>
            <person name="Coil D.A."/>
            <person name="Badger J.H."/>
            <person name="Forberger H.C."/>
            <person name="Riggs F."/>
            <person name="Madupu R."/>
            <person name="Fedorova N."/>
            <person name="Ward N."/>
            <person name="Robb F.T."/>
            <person name="Eisen J.A."/>
        </authorList>
    </citation>
    <scope>NUCLEOTIDE SEQUENCE [LARGE SCALE GENOMIC DNA]</scope>
    <source>
        <strain>ATCC 35947 / DSM 3960 / H-6-12</strain>
    </source>
</reference>
<name>RF1_DICT6</name>
<organism>
    <name type="scientific">Dictyoglomus thermophilum (strain ATCC 35947 / DSM 3960 / H-6-12)</name>
    <dbReference type="NCBI Taxonomy" id="309799"/>
    <lineage>
        <taxon>Bacteria</taxon>
        <taxon>Pseudomonadati</taxon>
        <taxon>Dictyoglomota</taxon>
        <taxon>Dictyoglomia</taxon>
        <taxon>Dictyoglomales</taxon>
        <taxon>Dictyoglomaceae</taxon>
        <taxon>Dictyoglomus</taxon>
    </lineage>
</organism>
<evidence type="ECO:0000255" key="1">
    <source>
        <dbReference type="HAMAP-Rule" id="MF_00093"/>
    </source>
</evidence>
<accession>B5YDB2</accession>
<protein>
    <recommendedName>
        <fullName evidence="1">Peptide chain release factor 1</fullName>
        <shortName evidence="1">RF-1</shortName>
    </recommendedName>
</protein>
<comment type="function">
    <text evidence="1">Peptide chain release factor 1 directs the termination of translation in response to the peptide chain termination codons UAG and UAA.</text>
</comment>
<comment type="subcellular location">
    <subcellularLocation>
        <location evidence="1">Cytoplasm</location>
    </subcellularLocation>
</comment>
<comment type="PTM">
    <text evidence="1">Methylated by PrmC. Methylation increases the termination efficiency of RF1.</text>
</comment>
<comment type="similarity">
    <text evidence="1">Belongs to the prokaryotic/mitochondrial release factor family.</text>
</comment>